<comment type="catalytic activity">
    <reaction evidence="2">
        <text>Hydrolysis of terminal non-reducing beta-D-fructofuranoside residues in beta-D-fructofuranosides.</text>
        <dbReference type="EC" id="3.2.1.26"/>
    </reaction>
</comment>
<comment type="biophysicochemical properties">
    <phDependence>
        <text>Optimum pH is 6.5-7.0.</text>
    </phDependence>
</comment>
<comment type="pathway">
    <text>Glycan biosynthesis; sucrose metabolism.</text>
</comment>
<comment type="subcellular location">
    <subcellularLocation>
        <location evidence="3">Cytoplasm</location>
    </subcellularLocation>
</comment>
<comment type="similarity">
    <text evidence="3">Belongs to the glycosyl hydrolase 32 family.</text>
</comment>
<name>SCRB_LACLL</name>
<gene>
    <name type="primary">scrB</name>
    <name type="synonym">sacA</name>
</gene>
<proteinExistence type="evidence at protein level"/>
<reference key="1">
    <citation type="journal article" date="1992" name="Gene">
        <title>Transcriptional regulation of the Tn5276-located Lactococcus lactis sucrose operon and characterization of the sacA gene encoding sucrose-6-phosphate hydrolase.</title>
        <authorList>
            <person name="Rauch P.J."/>
            <person name="de Vos W.M."/>
        </authorList>
    </citation>
    <scope>NUCLEOTIDE SEQUENCE [GENOMIC DNA]</scope>
    <source>
        <strain>NIZO R5</strain>
    </source>
</reference>
<reference key="2">
    <citation type="journal article" date="1991" name="J. Biol. Chem.">
        <title>Transposon-encoded sucrose metabolism in Lactococcus lactis. Purification of sucrose-6-phosphate hydrolase and genetic linkage to N5-(L-1-carboxyethyl)-L-ornithine synthase in strain K1.</title>
        <authorList>
            <person name="Thompson J."/>
            <person name="Nguyen N.Y."/>
            <person name="Sackett D.L."/>
            <person name="Donkersloot J.A."/>
        </authorList>
    </citation>
    <scope>PROTEIN SEQUENCE OF 1-12</scope>
    <scope>CHARACTERIZATION</scope>
    <source>
        <strain>K1</strain>
    </source>
</reference>
<protein>
    <recommendedName>
        <fullName>Sucrose-6-phosphate hydrolase</fullName>
        <shortName>Sucrase</shortName>
        <ecNumber>3.2.1.26</ecNumber>
    </recommendedName>
    <alternativeName>
        <fullName>Invertase</fullName>
    </alternativeName>
</protein>
<feature type="chain" id="PRO_0000169873" description="Sucrose-6-phosphate hydrolase">
    <location>
        <begin position="1"/>
        <end position="473"/>
    </location>
</feature>
<feature type="active site" evidence="2">
    <location>
        <position position="47"/>
    </location>
</feature>
<feature type="binding site" evidence="1">
    <location>
        <begin position="44"/>
        <end position="47"/>
    </location>
    <ligand>
        <name>substrate</name>
    </ligand>
</feature>
<feature type="binding site" evidence="1">
    <location>
        <position position="63"/>
    </location>
    <ligand>
        <name>substrate</name>
    </ligand>
</feature>
<feature type="binding site" evidence="1">
    <location>
        <begin position="106"/>
        <end position="107"/>
    </location>
    <ligand>
        <name>substrate</name>
    </ligand>
</feature>
<feature type="binding site" evidence="1">
    <location>
        <begin position="167"/>
        <end position="168"/>
    </location>
    <ligand>
        <name>substrate</name>
    </ligand>
</feature>
<feature type="binding site" evidence="1">
    <location>
        <position position="224"/>
    </location>
    <ligand>
        <name>substrate</name>
    </ligand>
</feature>
<feature type="sequence conflict" description="In Ref. 2; AA sequence." evidence="3" ref="2">
    <original>S</original>
    <variation>Q</variation>
    <location>
        <position position="4"/>
    </location>
</feature>
<sequence>MKWSTKQRYRTYDSYSESDLESLRKLALKSPWKSNFHIEPETGLLNDPNGFSYFNEKWHLFYQHFPFGPVHGLKSWVHLVSDDLVHFEKTGLVLYPDTKYDNAGVYSGSALAFENFLFLIYTGNHRGEDWVRTPYQLGAKIDKNNQLVKFTEPLIYPDFSQTTDHFRDPQIFSFQGQIYCLIGAQSSQKNGIIKLYKAIENNLTDWKDLGNLDFSKEKMGYMIECPNLIFINGRSVLVFCPQGLDKSIVKYDNIYPNVYVIADDFTTGSKNQLKNAGQLINLDEGFDCYATQSFNAPDGSAYAISWLGLPETSYPTDKYNVQGVLSMVKKLSIKDNKLYQYPVEKMKELRQMEQDLLLADNNIITSNSYELEVDFRQQTSTLLSLMTNEKGDSALKVEIDKENNTITLIRNYEKRLAHVKIEKMNVFIDQSIFEIFINDGEKVLSDCRVFPNKNQYSIRSQNPIKIKLWELKK</sequence>
<keyword id="KW-0119">Carbohydrate metabolism</keyword>
<keyword id="KW-0963">Cytoplasm</keyword>
<keyword id="KW-0903">Direct protein sequencing</keyword>
<keyword id="KW-0326">Glycosidase</keyword>
<keyword id="KW-0378">Hydrolase</keyword>
<accession>Q04937</accession>
<organism>
    <name type="scientific">Lactococcus lactis subsp. lactis</name>
    <name type="common">Streptococcus lactis</name>
    <dbReference type="NCBI Taxonomy" id="1360"/>
    <lineage>
        <taxon>Bacteria</taxon>
        <taxon>Bacillati</taxon>
        <taxon>Bacillota</taxon>
        <taxon>Bacilli</taxon>
        <taxon>Lactobacillales</taxon>
        <taxon>Streptococcaceae</taxon>
        <taxon>Lactococcus</taxon>
    </lineage>
</organism>
<evidence type="ECO:0000250" key="1"/>
<evidence type="ECO:0000255" key="2">
    <source>
        <dbReference type="PROSITE-ProRule" id="PRU10067"/>
    </source>
</evidence>
<evidence type="ECO:0000305" key="3"/>
<dbReference type="EC" id="3.2.1.26"/>
<dbReference type="EMBL" id="M96669">
    <property type="protein sequence ID" value="AAA25218.1"/>
    <property type="molecule type" value="Genomic_DNA"/>
</dbReference>
<dbReference type="PIR" id="JH0754">
    <property type="entry name" value="JH0754"/>
</dbReference>
<dbReference type="SMR" id="Q04937"/>
<dbReference type="CAZy" id="GH32">
    <property type="family name" value="Glycoside Hydrolase Family 32"/>
</dbReference>
<dbReference type="SABIO-RK" id="Q04937"/>
<dbReference type="UniPathway" id="UPA00238"/>
<dbReference type="GO" id="GO:0005737">
    <property type="term" value="C:cytoplasm"/>
    <property type="evidence" value="ECO:0007669"/>
    <property type="project" value="UniProtKB-SubCell"/>
</dbReference>
<dbReference type="GO" id="GO:0004564">
    <property type="term" value="F:beta-fructofuranosidase activity"/>
    <property type="evidence" value="ECO:0007669"/>
    <property type="project" value="UniProtKB-EC"/>
</dbReference>
<dbReference type="GO" id="GO:0005985">
    <property type="term" value="P:sucrose metabolic process"/>
    <property type="evidence" value="ECO:0007669"/>
    <property type="project" value="UniProtKB-UniPathway"/>
</dbReference>
<dbReference type="CDD" id="cd18623">
    <property type="entry name" value="GH32_ScrB-like"/>
    <property type="match status" value="1"/>
</dbReference>
<dbReference type="Gene3D" id="2.60.120.560">
    <property type="entry name" value="Exo-inulinase, domain 1"/>
    <property type="match status" value="1"/>
</dbReference>
<dbReference type="Gene3D" id="2.115.10.20">
    <property type="entry name" value="Glycosyl hydrolase domain, family 43"/>
    <property type="match status" value="1"/>
</dbReference>
<dbReference type="InterPro" id="IPR013320">
    <property type="entry name" value="ConA-like_dom_sf"/>
</dbReference>
<dbReference type="InterPro" id="IPR051214">
    <property type="entry name" value="GH32_Enzymes"/>
</dbReference>
<dbReference type="InterPro" id="IPR001362">
    <property type="entry name" value="Glyco_hydro_32"/>
</dbReference>
<dbReference type="InterPro" id="IPR018053">
    <property type="entry name" value="Glyco_hydro_32_AS"/>
</dbReference>
<dbReference type="InterPro" id="IPR013189">
    <property type="entry name" value="Glyco_hydro_32_C"/>
</dbReference>
<dbReference type="InterPro" id="IPR013148">
    <property type="entry name" value="Glyco_hydro_32_N"/>
</dbReference>
<dbReference type="InterPro" id="IPR023296">
    <property type="entry name" value="Glyco_hydro_beta-prop_sf"/>
</dbReference>
<dbReference type="InterPro" id="IPR006232">
    <property type="entry name" value="Suc6P_hydrolase"/>
</dbReference>
<dbReference type="NCBIfam" id="TIGR01322">
    <property type="entry name" value="scrB_fam"/>
    <property type="match status" value="1"/>
</dbReference>
<dbReference type="PANTHER" id="PTHR43101">
    <property type="entry name" value="BETA-FRUCTOSIDASE"/>
    <property type="match status" value="1"/>
</dbReference>
<dbReference type="PANTHER" id="PTHR43101:SF1">
    <property type="entry name" value="BETA-FRUCTOSIDASE"/>
    <property type="match status" value="1"/>
</dbReference>
<dbReference type="Pfam" id="PF08244">
    <property type="entry name" value="Glyco_hydro_32C"/>
    <property type="match status" value="1"/>
</dbReference>
<dbReference type="Pfam" id="PF00251">
    <property type="entry name" value="Glyco_hydro_32N"/>
    <property type="match status" value="1"/>
</dbReference>
<dbReference type="SMART" id="SM00640">
    <property type="entry name" value="Glyco_32"/>
    <property type="match status" value="1"/>
</dbReference>
<dbReference type="SUPFAM" id="SSF75005">
    <property type="entry name" value="Arabinanase/levansucrase/invertase"/>
    <property type="match status" value="1"/>
</dbReference>
<dbReference type="SUPFAM" id="SSF49899">
    <property type="entry name" value="Concanavalin A-like lectins/glucanases"/>
    <property type="match status" value="1"/>
</dbReference>
<dbReference type="PROSITE" id="PS00609">
    <property type="entry name" value="GLYCOSYL_HYDROL_F32"/>
    <property type="match status" value="1"/>
</dbReference>